<organism>
    <name type="scientific">Escherichia coli (strain ATCC 8739 / DSM 1576 / NBRC 3972 / NCIMB 8545 / WDCM 00012 / Crooks)</name>
    <dbReference type="NCBI Taxonomy" id="481805"/>
    <lineage>
        <taxon>Bacteria</taxon>
        <taxon>Pseudomonadati</taxon>
        <taxon>Pseudomonadota</taxon>
        <taxon>Gammaproteobacteria</taxon>
        <taxon>Enterobacterales</taxon>
        <taxon>Enterobacteriaceae</taxon>
        <taxon>Escherichia</taxon>
    </lineage>
</organism>
<comment type="function">
    <text evidence="1">Condensation of UDP-2,3-diacylglucosamine and 2,3-diacylglucosamine-1-phosphate to form lipid A disaccharide, a precursor of lipid A, a phosphorylated glycolipid that anchors the lipopolysaccharide to the outer membrane of the cell.</text>
</comment>
<comment type="catalytic activity">
    <reaction evidence="1">
        <text>2-N,3-O-bis[(3R)-3-hydroxytetradecanoyl]-alpha-D-glucosaminyl 1-phosphate + UDP-2-N,3-O-bis[(3R)-3-hydroxytetradecanoyl]-alpha-D-glucosamine = lipid A disaccharide (E. coli) + UDP + H(+)</text>
        <dbReference type="Rhea" id="RHEA:22668"/>
        <dbReference type="ChEBI" id="CHEBI:15378"/>
        <dbReference type="ChEBI" id="CHEBI:57957"/>
        <dbReference type="ChEBI" id="CHEBI:58223"/>
        <dbReference type="ChEBI" id="CHEBI:58466"/>
        <dbReference type="ChEBI" id="CHEBI:78847"/>
    </reaction>
</comment>
<comment type="catalytic activity">
    <reaction evidence="1">
        <text>a lipid X + a UDP-2-N,3-O-bis[(3R)-3-hydroxyacyl]-alpha-D-glucosamine = a lipid A disaccharide + UDP + H(+)</text>
        <dbReference type="Rhea" id="RHEA:67828"/>
        <dbReference type="ChEBI" id="CHEBI:15378"/>
        <dbReference type="ChEBI" id="CHEBI:58223"/>
        <dbReference type="ChEBI" id="CHEBI:137748"/>
        <dbReference type="ChEBI" id="CHEBI:176338"/>
        <dbReference type="ChEBI" id="CHEBI:176343"/>
        <dbReference type="EC" id="2.4.1.182"/>
    </reaction>
</comment>
<comment type="pathway">
    <text evidence="1">Glycolipid biosynthesis; lipid IV(A) biosynthesis; lipid IV(A) from (3R)-3-hydroxytetradecanoyl-[acyl-carrier-protein] and UDP-N-acetyl-alpha-D-glucosamine: step 5/6.</text>
</comment>
<comment type="similarity">
    <text evidence="1">Belongs to the LpxB family.</text>
</comment>
<protein>
    <recommendedName>
        <fullName evidence="1">Lipid-A-disaccharide synthase</fullName>
        <ecNumber evidence="1">2.4.1.182</ecNumber>
    </recommendedName>
</protein>
<dbReference type="EC" id="2.4.1.182" evidence="1"/>
<dbReference type="EMBL" id="CP000946">
    <property type="protein sequence ID" value="ACA79092.1"/>
    <property type="molecule type" value="Genomic_DNA"/>
</dbReference>
<dbReference type="RefSeq" id="WP_000139679.1">
    <property type="nucleotide sequence ID" value="NZ_MTFT01000035.1"/>
</dbReference>
<dbReference type="SMR" id="B1IQF9"/>
<dbReference type="CAZy" id="GT19">
    <property type="family name" value="Glycosyltransferase Family 19"/>
</dbReference>
<dbReference type="KEGG" id="ecl:EcolC_3478"/>
<dbReference type="HOGENOM" id="CLU_036577_3_0_6"/>
<dbReference type="UniPathway" id="UPA00359">
    <property type="reaction ID" value="UER00481"/>
</dbReference>
<dbReference type="GO" id="GO:0016020">
    <property type="term" value="C:membrane"/>
    <property type="evidence" value="ECO:0007669"/>
    <property type="project" value="GOC"/>
</dbReference>
<dbReference type="GO" id="GO:0008915">
    <property type="term" value="F:lipid-A-disaccharide synthase activity"/>
    <property type="evidence" value="ECO:0007669"/>
    <property type="project" value="UniProtKB-UniRule"/>
</dbReference>
<dbReference type="GO" id="GO:0005543">
    <property type="term" value="F:phospholipid binding"/>
    <property type="evidence" value="ECO:0007669"/>
    <property type="project" value="TreeGrafter"/>
</dbReference>
<dbReference type="GO" id="GO:0009245">
    <property type="term" value="P:lipid A biosynthetic process"/>
    <property type="evidence" value="ECO:0007669"/>
    <property type="project" value="UniProtKB-UniRule"/>
</dbReference>
<dbReference type="CDD" id="cd01635">
    <property type="entry name" value="Glycosyltransferase_GTB-type"/>
    <property type="match status" value="1"/>
</dbReference>
<dbReference type="HAMAP" id="MF_00392">
    <property type="entry name" value="LpxB"/>
    <property type="match status" value="1"/>
</dbReference>
<dbReference type="InterPro" id="IPR003835">
    <property type="entry name" value="Glyco_trans_19"/>
</dbReference>
<dbReference type="NCBIfam" id="TIGR00215">
    <property type="entry name" value="lpxB"/>
    <property type="match status" value="1"/>
</dbReference>
<dbReference type="PANTHER" id="PTHR30372">
    <property type="entry name" value="LIPID-A-DISACCHARIDE SYNTHASE"/>
    <property type="match status" value="1"/>
</dbReference>
<dbReference type="PANTHER" id="PTHR30372:SF4">
    <property type="entry name" value="LIPID-A-DISACCHARIDE SYNTHASE, MITOCHONDRIAL-RELATED"/>
    <property type="match status" value="1"/>
</dbReference>
<dbReference type="Pfam" id="PF02684">
    <property type="entry name" value="LpxB"/>
    <property type="match status" value="1"/>
</dbReference>
<dbReference type="SUPFAM" id="SSF53756">
    <property type="entry name" value="UDP-Glycosyltransferase/glycogen phosphorylase"/>
    <property type="match status" value="1"/>
</dbReference>
<accession>B1IQF9</accession>
<feature type="chain" id="PRO_1000080278" description="Lipid-A-disaccharide synthase">
    <location>
        <begin position="1"/>
        <end position="382"/>
    </location>
</feature>
<gene>
    <name evidence="1" type="primary">lpxB</name>
    <name type="ordered locus">EcolC_3478</name>
</gene>
<reference key="1">
    <citation type="submission" date="2008-02" db="EMBL/GenBank/DDBJ databases">
        <title>Complete sequence of Escherichia coli C str. ATCC 8739.</title>
        <authorList>
            <person name="Copeland A."/>
            <person name="Lucas S."/>
            <person name="Lapidus A."/>
            <person name="Glavina del Rio T."/>
            <person name="Dalin E."/>
            <person name="Tice H."/>
            <person name="Bruce D."/>
            <person name="Goodwin L."/>
            <person name="Pitluck S."/>
            <person name="Kiss H."/>
            <person name="Brettin T."/>
            <person name="Detter J.C."/>
            <person name="Han C."/>
            <person name="Kuske C.R."/>
            <person name="Schmutz J."/>
            <person name="Larimer F."/>
            <person name="Land M."/>
            <person name="Hauser L."/>
            <person name="Kyrpides N."/>
            <person name="Mikhailova N."/>
            <person name="Ingram L."/>
            <person name="Richardson P."/>
        </authorList>
    </citation>
    <scope>NUCLEOTIDE SEQUENCE [LARGE SCALE GENOMIC DNA]</scope>
    <source>
        <strain>ATCC 8739 / DSM 1576 / NBRC 3972 / NCIMB 8545 / WDCM 00012 / Crooks</strain>
    </source>
</reference>
<evidence type="ECO:0000255" key="1">
    <source>
        <dbReference type="HAMAP-Rule" id="MF_00392"/>
    </source>
</evidence>
<name>LPXB_ECOLC</name>
<sequence>MTEQRPLTIALVAGETSGDILGAGLIRALKERVPNARFVGVAGPRMQAEGCEAWYEMEELAVMGIVEVLGRLRRLLHIRADLTKRFGELKPDVFVGIDAPDFNITLEGNLKKQGIKTIHYVSPSVWAWRQKRVFKIGRATDLVLAFLPFEKAFYDKYNVPCRFIGHTMADAMPLDPDKNGARDVLGIPYDAHCLALLPGSRGAEVEMLSADFLKTAQLLRQTYPDLEIVVPLVNAKRREQFERIKAEVAPDLSVHLLDGMGREAMVASDAALLASGTAALECMLAKCPMVVGYRMKPFTFWLAKRLVKTDYVSLPNLLAGRELVKELLQEECEPQKLAAALLPLLANGKTSHAMHDTFRELHQQIRCNADEQAAQAVLELAQ</sequence>
<proteinExistence type="inferred from homology"/>
<keyword id="KW-0328">Glycosyltransferase</keyword>
<keyword id="KW-0441">Lipid A biosynthesis</keyword>
<keyword id="KW-0444">Lipid biosynthesis</keyword>
<keyword id="KW-0443">Lipid metabolism</keyword>
<keyword id="KW-0808">Transferase</keyword>